<comment type="function">
    <text evidence="1">Phosphorylation of dTMP to form dTDP in both de novo and salvage pathways of dTTP synthesis.</text>
</comment>
<comment type="catalytic activity">
    <reaction evidence="1">
        <text>dTMP + ATP = dTDP + ADP</text>
        <dbReference type="Rhea" id="RHEA:13517"/>
        <dbReference type="ChEBI" id="CHEBI:30616"/>
        <dbReference type="ChEBI" id="CHEBI:58369"/>
        <dbReference type="ChEBI" id="CHEBI:63528"/>
        <dbReference type="ChEBI" id="CHEBI:456216"/>
        <dbReference type="EC" id="2.7.4.9"/>
    </reaction>
</comment>
<comment type="similarity">
    <text evidence="1">Belongs to the thymidylate kinase family.</text>
</comment>
<evidence type="ECO:0000255" key="1">
    <source>
        <dbReference type="HAMAP-Rule" id="MF_00165"/>
    </source>
</evidence>
<name>KTHY_BACP2</name>
<proteinExistence type="inferred from homology"/>
<feature type="chain" id="PRO_1000058248" description="Thymidylate kinase">
    <location>
        <begin position="1"/>
        <end position="212"/>
    </location>
</feature>
<feature type="binding site" evidence="1">
    <location>
        <begin position="10"/>
        <end position="17"/>
    </location>
    <ligand>
        <name>ATP</name>
        <dbReference type="ChEBI" id="CHEBI:30616"/>
    </ligand>
</feature>
<organism>
    <name type="scientific">Bacillus pumilus (strain SAFR-032)</name>
    <dbReference type="NCBI Taxonomy" id="315750"/>
    <lineage>
        <taxon>Bacteria</taxon>
        <taxon>Bacillati</taxon>
        <taxon>Bacillota</taxon>
        <taxon>Bacilli</taxon>
        <taxon>Bacillales</taxon>
        <taxon>Bacillaceae</taxon>
        <taxon>Bacillus</taxon>
    </lineage>
</organism>
<keyword id="KW-0067">ATP-binding</keyword>
<keyword id="KW-0418">Kinase</keyword>
<keyword id="KW-0545">Nucleotide biosynthesis</keyword>
<keyword id="KW-0547">Nucleotide-binding</keyword>
<keyword id="KW-0808">Transferase</keyword>
<accession>A8F8Z5</accession>
<reference key="1">
    <citation type="journal article" date="2007" name="PLoS ONE">
        <title>Paradoxical DNA repair and peroxide resistance gene conservation in Bacillus pumilus SAFR-032.</title>
        <authorList>
            <person name="Gioia J."/>
            <person name="Yerrapragada S."/>
            <person name="Qin X."/>
            <person name="Jiang H."/>
            <person name="Igboeli O.C."/>
            <person name="Muzny D."/>
            <person name="Dugan-Rocha S."/>
            <person name="Ding Y."/>
            <person name="Hawes A."/>
            <person name="Liu W."/>
            <person name="Perez L."/>
            <person name="Kovar C."/>
            <person name="Dinh H."/>
            <person name="Lee S."/>
            <person name="Nazareth L."/>
            <person name="Blyth P."/>
            <person name="Holder M."/>
            <person name="Buhay C."/>
            <person name="Tirumalai M.R."/>
            <person name="Liu Y."/>
            <person name="Dasgupta I."/>
            <person name="Bokhetache L."/>
            <person name="Fujita M."/>
            <person name="Karouia F."/>
            <person name="Eswara Moorthy P."/>
            <person name="Siefert J."/>
            <person name="Uzman A."/>
            <person name="Buzumbo P."/>
            <person name="Verma A."/>
            <person name="Zwiya H."/>
            <person name="McWilliams B.D."/>
            <person name="Olowu A."/>
            <person name="Clinkenbeard K.D."/>
            <person name="Newcombe D."/>
            <person name="Golebiewski L."/>
            <person name="Petrosino J.F."/>
            <person name="Nicholson W.L."/>
            <person name="Fox G.E."/>
            <person name="Venkateswaran K."/>
            <person name="Highlander S.K."/>
            <person name="Weinstock G.M."/>
        </authorList>
    </citation>
    <scope>NUCLEOTIDE SEQUENCE [LARGE SCALE GENOMIC DNA]</scope>
    <source>
        <strain>SAFR-032</strain>
    </source>
</reference>
<protein>
    <recommendedName>
        <fullName evidence="1">Thymidylate kinase</fullName>
        <ecNumber evidence="1">2.7.4.9</ecNumber>
    </recommendedName>
    <alternativeName>
        <fullName evidence="1">dTMP kinase</fullName>
    </alternativeName>
</protein>
<dbReference type="EC" id="2.7.4.9" evidence="1"/>
<dbReference type="EMBL" id="CP000813">
    <property type="protein sequence ID" value="ABV60712.1"/>
    <property type="molecule type" value="Genomic_DNA"/>
</dbReference>
<dbReference type="RefSeq" id="WP_012008639.1">
    <property type="nucleotide sequence ID" value="NC_009848.4"/>
</dbReference>
<dbReference type="SMR" id="A8F8Z5"/>
<dbReference type="STRING" id="315750.BPUM_0012"/>
<dbReference type="GeneID" id="5619249"/>
<dbReference type="KEGG" id="bpu:BPUM_0012"/>
<dbReference type="eggNOG" id="COG0125">
    <property type="taxonomic scope" value="Bacteria"/>
</dbReference>
<dbReference type="HOGENOM" id="CLU_049131_0_2_9"/>
<dbReference type="OrthoDB" id="9774907at2"/>
<dbReference type="Proteomes" id="UP000001355">
    <property type="component" value="Chromosome"/>
</dbReference>
<dbReference type="GO" id="GO:0005829">
    <property type="term" value="C:cytosol"/>
    <property type="evidence" value="ECO:0007669"/>
    <property type="project" value="TreeGrafter"/>
</dbReference>
<dbReference type="GO" id="GO:0005524">
    <property type="term" value="F:ATP binding"/>
    <property type="evidence" value="ECO:0007669"/>
    <property type="project" value="UniProtKB-UniRule"/>
</dbReference>
<dbReference type="GO" id="GO:0004798">
    <property type="term" value="F:dTMP kinase activity"/>
    <property type="evidence" value="ECO:0007669"/>
    <property type="project" value="UniProtKB-UniRule"/>
</dbReference>
<dbReference type="GO" id="GO:0006233">
    <property type="term" value="P:dTDP biosynthetic process"/>
    <property type="evidence" value="ECO:0007669"/>
    <property type="project" value="InterPro"/>
</dbReference>
<dbReference type="GO" id="GO:0006235">
    <property type="term" value="P:dTTP biosynthetic process"/>
    <property type="evidence" value="ECO:0007669"/>
    <property type="project" value="UniProtKB-UniRule"/>
</dbReference>
<dbReference type="GO" id="GO:0006227">
    <property type="term" value="P:dUDP biosynthetic process"/>
    <property type="evidence" value="ECO:0007669"/>
    <property type="project" value="TreeGrafter"/>
</dbReference>
<dbReference type="CDD" id="cd01672">
    <property type="entry name" value="TMPK"/>
    <property type="match status" value="1"/>
</dbReference>
<dbReference type="FunFam" id="3.40.50.300:FF:000225">
    <property type="entry name" value="Thymidylate kinase"/>
    <property type="match status" value="1"/>
</dbReference>
<dbReference type="Gene3D" id="3.40.50.300">
    <property type="entry name" value="P-loop containing nucleotide triphosphate hydrolases"/>
    <property type="match status" value="1"/>
</dbReference>
<dbReference type="HAMAP" id="MF_00165">
    <property type="entry name" value="Thymidylate_kinase"/>
    <property type="match status" value="1"/>
</dbReference>
<dbReference type="InterPro" id="IPR027417">
    <property type="entry name" value="P-loop_NTPase"/>
</dbReference>
<dbReference type="InterPro" id="IPR039430">
    <property type="entry name" value="Thymidylate_kin-like_dom"/>
</dbReference>
<dbReference type="InterPro" id="IPR018095">
    <property type="entry name" value="Thymidylate_kin_CS"/>
</dbReference>
<dbReference type="InterPro" id="IPR018094">
    <property type="entry name" value="Thymidylate_kinase"/>
</dbReference>
<dbReference type="NCBIfam" id="TIGR00041">
    <property type="entry name" value="DTMP_kinase"/>
    <property type="match status" value="1"/>
</dbReference>
<dbReference type="PANTHER" id="PTHR10344">
    <property type="entry name" value="THYMIDYLATE KINASE"/>
    <property type="match status" value="1"/>
</dbReference>
<dbReference type="PANTHER" id="PTHR10344:SF4">
    <property type="entry name" value="UMP-CMP KINASE 2, MITOCHONDRIAL"/>
    <property type="match status" value="1"/>
</dbReference>
<dbReference type="Pfam" id="PF02223">
    <property type="entry name" value="Thymidylate_kin"/>
    <property type="match status" value="1"/>
</dbReference>
<dbReference type="SUPFAM" id="SSF52540">
    <property type="entry name" value="P-loop containing nucleoside triphosphate hydrolases"/>
    <property type="match status" value="1"/>
</dbReference>
<dbReference type="PROSITE" id="PS01331">
    <property type="entry name" value="THYMIDYLATE_KINASE"/>
    <property type="match status" value="1"/>
</dbReference>
<sequence length="212" mass="24102">MSGMFITFEGPEGAGKTTVIRKVHEEMERQGYAVMATREPGGIDIAEQIREVILNEKNTKMDAKTEALLYAAARRQHLAEKVEPALQRGETVLCDRFVDSSLAYQGYARGLGIDQVRSINDFAIDGTMPQMTIYFSITPEEGLKRIHANQGREKNRLDMETLNFHQLVREGYELLIAQSPERFHVVDASKPMQDVYEEVLRVIQDTLKKNQI</sequence>
<gene>
    <name evidence="1" type="primary">tmk</name>
    <name type="ordered locus">BPUM_0012</name>
</gene>